<feature type="chain" id="PRO_1000005948" description="DNA-directed RNA polymerase subunit omega">
    <location>
        <begin position="1"/>
        <end position="117"/>
    </location>
</feature>
<feature type="region of interest" description="Disordered" evidence="2">
    <location>
        <begin position="96"/>
        <end position="117"/>
    </location>
</feature>
<feature type="compositionally biased region" description="Basic and acidic residues" evidence="2">
    <location>
        <begin position="96"/>
        <end position="105"/>
    </location>
</feature>
<feature type="compositionally biased region" description="Low complexity" evidence="2">
    <location>
        <begin position="108"/>
        <end position="117"/>
    </location>
</feature>
<name>RPOZ_LACLM</name>
<organism>
    <name type="scientific">Lactococcus lactis subsp. cremoris (strain MG1363)</name>
    <dbReference type="NCBI Taxonomy" id="416870"/>
    <lineage>
        <taxon>Bacteria</taxon>
        <taxon>Bacillati</taxon>
        <taxon>Bacillota</taxon>
        <taxon>Bacilli</taxon>
        <taxon>Lactobacillales</taxon>
        <taxon>Streptococcaceae</taxon>
        <taxon>Lactococcus</taxon>
        <taxon>Lactococcus cremoris subsp. cremoris</taxon>
    </lineage>
</organism>
<dbReference type="EC" id="2.7.7.6" evidence="1"/>
<dbReference type="EMBL" id="AM406671">
    <property type="protein sequence ID" value="CAL98721.1"/>
    <property type="molecule type" value="Genomic_DNA"/>
</dbReference>
<dbReference type="RefSeq" id="WP_011835858.1">
    <property type="nucleotide sequence ID" value="NC_009004.1"/>
</dbReference>
<dbReference type="SMR" id="A2RN34"/>
<dbReference type="STRING" id="416870.llmg_2154"/>
<dbReference type="KEGG" id="llm:llmg_2154"/>
<dbReference type="eggNOG" id="COG1758">
    <property type="taxonomic scope" value="Bacteria"/>
</dbReference>
<dbReference type="HOGENOM" id="CLU_125406_0_0_9"/>
<dbReference type="OrthoDB" id="9815459at2"/>
<dbReference type="PhylomeDB" id="A2RN34"/>
<dbReference type="Proteomes" id="UP000000364">
    <property type="component" value="Chromosome"/>
</dbReference>
<dbReference type="GO" id="GO:0000428">
    <property type="term" value="C:DNA-directed RNA polymerase complex"/>
    <property type="evidence" value="ECO:0007669"/>
    <property type="project" value="UniProtKB-KW"/>
</dbReference>
<dbReference type="GO" id="GO:0003677">
    <property type="term" value="F:DNA binding"/>
    <property type="evidence" value="ECO:0007669"/>
    <property type="project" value="UniProtKB-UniRule"/>
</dbReference>
<dbReference type="GO" id="GO:0003899">
    <property type="term" value="F:DNA-directed RNA polymerase activity"/>
    <property type="evidence" value="ECO:0007669"/>
    <property type="project" value="UniProtKB-UniRule"/>
</dbReference>
<dbReference type="GO" id="GO:0006351">
    <property type="term" value="P:DNA-templated transcription"/>
    <property type="evidence" value="ECO:0007669"/>
    <property type="project" value="UniProtKB-UniRule"/>
</dbReference>
<dbReference type="Gene3D" id="3.90.940.10">
    <property type="match status" value="1"/>
</dbReference>
<dbReference type="HAMAP" id="MF_00366">
    <property type="entry name" value="RNApol_bact_RpoZ"/>
    <property type="match status" value="1"/>
</dbReference>
<dbReference type="InterPro" id="IPR003716">
    <property type="entry name" value="DNA-dir_RNA_pol_omega"/>
</dbReference>
<dbReference type="InterPro" id="IPR006110">
    <property type="entry name" value="Pol_omega/Rpo6/RPB6"/>
</dbReference>
<dbReference type="InterPro" id="IPR036161">
    <property type="entry name" value="RPB6/omega-like_sf"/>
</dbReference>
<dbReference type="NCBIfam" id="TIGR00690">
    <property type="entry name" value="rpoZ"/>
    <property type="match status" value="1"/>
</dbReference>
<dbReference type="PANTHER" id="PTHR34476">
    <property type="entry name" value="DNA-DIRECTED RNA POLYMERASE SUBUNIT OMEGA"/>
    <property type="match status" value="1"/>
</dbReference>
<dbReference type="PANTHER" id="PTHR34476:SF1">
    <property type="entry name" value="DNA-DIRECTED RNA POLYMERASE SUBUNIT OMEGA"/>
    <property type="match status" value="1"/>
</dbReference>
<dbReference type="Pfam" id="PF01192">
    <property type="entry name" value="RNA_pol_Rpb6"/>
    <property type="match status" value="1"/>
</dbReference>
<dbReference type="SMART" id="SM01409">
    <property type="entry name" value="RNA_pol_Rpb6"/>
    <property type="match status" value="1"/>
</dbReference>
<dbReference type="SUPFAM" id="SSF63562">
    <property type="entry name" value="RPB6/omega subunit-like"/>
    <property type="match status" value="1"/>
</dbReference>
<gene>
    <name evidence="1" type="primary">rpoZ</name>
    <name type="ordered locus">llmg_2154</name>
</gene>
<reference key="1">
    <citation type="journal article" date="2007" name="J. Bacteriol.">
        <title>The complete genome sequence of the lactic acid bacterial paradigm Lactococcus lactis subsp. cremoris MG1363.</title>
        <authorList>
            <person name="Wegmann U."/>
            <person name="O'Connell-Motherway M."/>
            <person name="Zomer A."/>
            <person name="Buist G."/>
            <person name="Shearman C."/>
            <person name="Canchaya C."/>
            <person name="Ventura M."/>
            <person name="Goesmann A."/>
            <person name="Gasson M.J."/>
            <person name="Kuipers O.P."/>
            <person name="van Sinderen D."/>
            <person name="Kok J."/>
        </authorList>
    </citation>
    <scope>NUCLEOTIDE SEQUENCE [LARGE SCALE GENOMIC DNA]</scope>
    <source>
        <strain>MG1363</strain>
    </source>
</reference>
<protein>
    <recommendedName>
        <fullName evidence="1">DNA-directed RNA polymerase subunit omega</fullName>
        <shortName evidence="1">RNAP omega subunit</shortName>
        <ecNumber evidence="1">2.7.7.6</ecNumber>
    </recommendedName>
    <alternativeName>
        <fullName evidence="1">RNA polymerase omega subunit</fullName>
    </alternativeName>
    <alternativeName>
        <fullName evidence="1">Transcriptase subunit omega</fullName>
    </alternativeName>
</protein>
<sequence>MMLEPSIDKLLDQVDSKYSLVVLEAKRAHELRDKERPTKEFKAVKRTLQALEEIADGTVKIHPAPELKRETLVEKRELERLQAKMKEQLIKEQIAKEEAEEEAKQKNSRAAKAAAAE</sequence>
<comment type="function">
    <text evidence="1">Promotes RNA polymerase assembly. Latches the N- and C-terminal regions of the beta' subunit thereby facilitating its interaction with the beta and alpha subunits.</text>
</comment>
<comment type="catalytic activity">
    <reaction evidence="1">
        <text>RNA(n) + a ribonucleoside 5'-triphosphate = RNA(n+1) + diphosphate</text>
        <dbReference type="Rhea" id="RHEA:21248"/>
        <dbReference type="Rhea" id="RHEA-COMP:14527"/>
        <dbReference type="Rhea" id="RHEA-COMP:17342"/>
        <dbReference type="ChEBI" id="CHEBI:33019"/>
        <dbReference type="ChEBI" id="CHEBI:61557"/>
        <dbReference type="ChEBI" id="CHEBI:140395"/>
        <dbReference type="EC" id="2.7.7.6"/>
    </reaction>
</comment>
<comment type="subunit">
    <text evidence="1">The RNAP catalytic core consists of 2 alpha, 1 beta, 1 beta' and 1 omega subunit. When a sigma factor is associated with the core the holoenzyme is formed, which can initiate transcription.</text>
</comment>
<comment type="similarity">
    <text evidence="1">Belongs to the RNA polymerase subunit omega family.</text>
</comment>
<proteinExistence type="inferred from homology"/>
<keyword id="KW-0240">DNA-directed RNA polymerase</keyword>
<keyword id="KW-0548">Nucleotidyltransferase</keyword>
<keyword id="KW-0804">Transcription</keyword>
<keyword id="KW-0808">Transferase</keyword>
<evidence type="ECO:0000255" key="1">
    <source>
        <dbReference type="HAMAP-Rule" id="MF_00366"/>
    </source>
</evidence>
<evidence type="ECO:0000256" key="2">
    <source>
        <dbReference type="SAM" id="MobiDB-lite"/>
    </source>
</evidence>
<accession>A2RN34</accession>